<accession>C4ZXN0</accession>
<feature type="chain" id="PRO_1000201875" description="UPF0758 protein YicR">
    <location>
        <begin position="1"/>
        <end position="222"/>
    </location>
</feature>
<feature type="domain" description="MPN" evidence="2">
    <location>
        <begin position="100"/>
        <end position="222"/>
    </location>
</feature>
<feature type="short sequence motif" description="JAMM motif" evidence="2">
    <location>
        <begin position="171"/>
        <end position="184"/>
    </location>
</feature>
<feature type="binding site" evidence="2">
    <location>
        <position position="171"/>
    </location>
    <ligand>
        <name>Zn(2+)</name>
        <dbReference type="ChEBI" id="CHEBI:29105"/>
        <note>catalytic</note>
    </ligand>
</feature>
<feature type="binding site" evidence="2">
    <location>
        <position position="173"/>
    </location>
    <ligand>
        <name>Zn(2+)</name>
        <dbReference type="ChEBI" id="CHEBI:29105"/>
        <note>catalytic</note>
    </ligand>
</feature>
<feature type="binding site" evidence="2">
    <location>
        <position position="184"/>
    </location>
    <ligand>
        <name>Zn(2+)</name>
        <dbReference type="ChEBI" id="CHEBI:29105"/>
        <note>catalytic</note>
    </ligand>
</feature>
<proteinExistence type="inferred from homology"/>
<sequence>MKNNSQLLMPREKMLKFGISALTDVELLALFLRTGTRGKDVLTLAKEMLENFGSLYGLLTSEYEQFSGVHGIGVAKFAQLKGIAELARRYYNVRMREESPLLSPEMTREFLQSQLTGEEREIFMVIFLDSQHRVITHRRLFSGTLNHVEVHPREIIREAIKINASALILAHNHPSGCAEPSKADKLITERIIKSCQFMDLRVLDHIVIGRGEYVSFAERGWI</sequence>
<keyword id="KW-0378">Hydrolase</keyword>
<keyword id="KW-0479">Metal-binding</keyword>
<keyword id="KW-0482">Metalloprotease</keyword>
<keyword id="KW-0645">Protease</keyword>
<keyword id="KW-0862">Zinc</keyword>
<dbReference type="EMBL" id="CP001396">
    <property type="protein sequence ID" value="ACR65292.1"/>
    <property type="molecule type" value="Genomic_DNA"/>
</dbReference>
<dbReference type="SMR" id="C4ZXN0"/>
<dbReference type="KEGG" id="ebw:BWG_3329"/>
<dbReference type="HOGENOM" id="CLU_073529_0_1_6"/>
<dbReference type="GO" id="GO:0046872">
    <property type="term" value="F:metal ion binding"/>
    <property type="evidence" value="ECO:0007669"/>
    <property type="project" value="UniProtKB-KW"/>
</dbReference>
<dbReference type="GO" id="GO:0008237">
    <property type="term" value="F:metallopeptidase activity"/>
    <property type="evidence" value="ECO:0007669"/>
    <property type="project" value="UniProtKB-KW"/>
</dbReference>
<dbReference type="GO" id="GO:0006508">
    <property type="term" value="P:proteolysis"/>
    <property type="evidence" value="ECO:0007669"/>
    <property type="project" value="UniProtKB-KW"/>
</dbReference>
<dbReference type="CDD" id="cd08071">
    <property type="entry name" value="MPN_DUF2466"/>
    <property type="match status" value="1"/>
</dbReference>
<dbReference type="Gene3D" id="3.40.140.10">
    <property type="entry name" value="Cytidine Deaminase, domain 2"/>
    <property type="match status" value="1"/>
</dbReference>
<dbReference type="HAMAP" id="MF_00018">
    <property type="entry name" value="UPF0758_YicR"/>
    <property type="match status" value="1"/>
</dbReference>
<dbReference type="InterPro" id="IPR037518">
    <property type="entry name" value="MPN"/>
</dbReference>
<dbReference type="InterPro" id="IPR025657">
    <property type="entry name" value="RadC_JAB"/>
</dbReference>
<dbReference type="InterPro" id="IPR010994">
    <property type="entry name" value="RuvA_2-like"/>
</dbReference>
<dbReference type="InterPro" id="IPR001405">
    <property type="entry name" value="UPF0758"/>
</dbReference>
<dbReference type="InterPro" id="IPR020891">
    <property type="entry name" value="UPF0758_CS"/>
</dbReference>
<dbReference type="InterPro" id="IPR046778">
    <property type="entry name" value="UPF0758_N"/>
</dbReference>
<dbReference type="InterPro" id="IPR022820">
    <property type="entry name" value="UPF0758_YicR"/>
</dbReference>
<dbReference type="NCBIfam" id="NF000642">
    <property type="entry name" value="PRK00024.1"/>
    <property type="match status" value="1"/>
</dbReference>
<dbReference type="NCBIfam" id="TIGR00608">
    <property type="entry name" value="radc"/>
    <property type="match status" value="1"/>
</dbReference>
<dbReference type="PANTHER" id="PTHR30471">
    <property type="entry name" value="DNA REPAIR PROTEIN RADC"/>
    <property type="match status" value="1"/>
</dbReference>
<dbReference type="PANTHER" id="PTHR30471:SF3">
    <property type="entry name" value="UPF0758 PROTEIN YEES-RELATED"/>
    <property type="match status" value="1"/>
</dbReference>
<dbReference type="Pfam" id="PF04002">
    <property type="entry name" value="RadC"/>
    <property type="match status" value="1"/>
</dbReference>
<dbReference type="Pfam" id="PF20582">
    <property type="entry name" value="UPF0758_N"/>
    <property type="match status" value="1"/>
</dbReference>
<dbReference type="SUPFAM" id="SSF47781">
    <property type="entry name" value="RuvA domain 2-like"/>
    <property type="match status" value="1"/>
</dbReference>
<dbReference type="PROSITE" id="PS50249">
    <property type="entry name" value="MPN"/>
    <property type="match status" value="1"/>
</dbReference>
<dbReference type="PROSITE" id="PS01302">
    <property type="entry name" value="UPF0758"/>
    <property type="match status" value="1"/>
</dbReference>
<reference key="1">
    <citation type="journal article" date="2009" name="J. Bacteriol.">
        <title>Genomic sequencing reveals regulatory mutations and recombinational events in the widely used MC4100 lineage of Escherichia coli K-12.</title>
        <authorList>
            <person name="Ferenci T."/>
            <person name="Zhou Z."/>
            <person name="Betteridge T."/>
            <person name="Ren Y."/>
            <person name="Liu Y."/>
            <person name="Feng L."/>
            <person name="Reeves P.R."/>
            <person name="Wang L."/>
        </authorList>
    </citation>
    <scope>NUCLEOTIDE SEQUENCE [LARGE SCALE GENOMIC DNA]</scope>
    <source>
        <strain>K12 / MC4100 / BW2952</strain>
    </source>
</reference>
<evidence type="ECO:0000255" key="1">
    <source>
        <dbReference type="HAMAP-Rule" id="MF_00018"/>
    </source>
</evidence>
<evidence type="ECO:0000255" key="2">
    <source>
        <dbReference type="PROSITE-ProRule" id="PRU01182"/>
    </source>
</evidence>
<protein>
    <recommendedName>
        <fullName evidence="1">UPF0758 protein YicR</fullName>
    </recommendedName>
</protein>
<gene>
    <name evidence="1" type="primary">yicR</name>
    <name type="ordered locus">BWG_3329</name>
</gene>
<comment type="similarity">
    <text evidence="1">Belongs to the UPF0758 family. YicR subfamily.</text>
</comment>
<name>YICR_ECOBW</name>
<organism>
    <name type="scientific">Escherichia coli (strain K12 / MC4100 / BW2952)</name>
    <dbReference type="NCBI Taxonomy" id="595496"/>
    <lineage>
        <taxon>Bacteria</taxon>
        <taxon>Pseudomonadati</taxon>
        <taxon>Pseudomonadota</taxon>
        <taxon>Gammaproteobacteria</taxon>
        <taxon>Enterobacterales</taxon>
        <taxon>Enterobacteriaceae</taxon>
        <taxon>Escherichia</taxon>
    </lineage>
</organism>